<sequence>MAAAVAAAAAMRSRILQVSSKVNATWYPASSFSSSSVPTVKLFIDGKFVESKSDKWIDIHNPATNEVVGRVPQSTKAEMDAAVESCKRAFPAWADTSILSRQQVLLRYQQLIKENLKEIARLITLEQGKTLADAEGDVFRGLQVVEHACSVTSLMLGETMPSITKDMDLYSYRLPLGVCAGIAPFNFPAMIPLWMFPMAMVCGNTFLMKPSERVPGATMLLAKLLQDSGAPDGTLNIIHGQHDAVNFICDHPDIKAISFVGSNQAGEYIFERGSRNGKRVQANMGAKNHGVVMPDANKENTLNQLVGAAFGAAGQRCMALSTAILVGEAKKWLPELVDRAKNLRVNAGDQPGADLGPLITPQAKERVCNLIDSGTKEGASILLDGRRIKVKGYENGNFVGPTIISNVKPSMTCYKEEIFGPVLVVLETETLDEAIKIVNDNPYGNGTAIFTTNGATARKYAHMVDVGQVGVNVPIPVPLPMFSFTGSRSSFRGDTNFYGKQGIQFYTQLKTITSQWKEEDATLSSPAVVMPTMGR</sequence>
<comment type="function">
    <text evidence="4">Malonate and methylmalonate semialdehyde dehydrogenase involved in the catabolism of valine, thymine, and compounds catabolized by way of beta-alanine, including uracil and cytidine.</text>
</comment>
<comment type="catalytic activity">
    <reaction evidence="4">
        <text>3-oxopropanoate + NAD(+) + CoA + H2O = hydrogencarbonate + acetyl-CoA + NADH + H(+)</text>
        <dbReference type="Rhea" id="RHEA:76615"/>
        <dbReference type="ChEBI" id="CHEBI:15377"/>
        <dbReference type="ChEBI" id="CHEBI:15378"/>
        <dbReference type="ChEBI" id="CHEBI:17544"/>
        <dbReference type="ChEBI" id="CHEBI:33190"/>
        <dbReference type="ChEBI" id="CHEBI:57287"/>
        <dbReference type="ChEBI" id="CHEBI:57288"/>
        <dbReference type="ChEBI" id="CHEBI:57540"/>
        <dbReference type="ChEBI" id="CHEBI:57945"/>
        <dbReference type="EC" id="1.2.1.27"/>
    </reaction>
    <physiologicalReaction direction="left-to-right" evidence="4">
        <dbReference type="Rhea" id="RHEA:76616"/>
    </physiologicalReaction>
</comment>
<comment type="catalytic activity">
    <reaction evidence="4">
        <text>2-methyl-3-oxopropanoate + NAD(+) + CoA + H2O = propanoyl-CoA + hydrogencarbonate + NADH + H(+)</text>
        <dbReference type="Rhea" id="RHEA:20804"/>
        <dbReference type="ChEBI" id="CHEBI:15377"/>
        <dbReference type="ChEBI" id="CHEBI:15378"/>
        <dbReference type="ChEBI" id="CHEBI:17544"/>
        <dbReference type="ChEBI" id="CHEBI:57287"/>
        <dbReference type="ChEBI" id="CHEBI:57392"/>
        <dbReference type="ChEBI" id="CHEBI:57540"/>
        <dbReference type="ChEBI" id="CHEBI:57700"/>
        <dbReference type="ChEBI" id="CHEBI:57945"/>
        <dbReference type="EC" id="1.2.1.27"/>
    </reaction>
    <physiologicalReaction direction="left-to-right" evidence="4">
        <dbReference type="Rhea" id="RHEA:20805"/>
    </physiologicalReaction>
</comment>
<comment type="catalytic activity">
    <reaction evidence="4">
        <text>(R)-2-methyl-3-oxopropanoate + NAD(+) + CoA + H2O = propanoyl-CoA + hydrogencarbonate + NADH + H(+)</text>
        <dbReference type="Rhea" id="RHEA:76623"/>
        <dbReference type="ChEBI" id="CHEBI:15377"/>
        <dbReference type="ChEBI" id="CHEBI:15378"/>
        <dbReference type="ChEBI" id="CHEBI:17544"/>
        <dbReference type="ChEBI" id="CHEBI:57287"/>
        <dbReference type="ChEBI" id="CHEBI:57392"/>
        <dbReference type="ChEBI" id="CHEBI:57540"/>
        <dbReference type="ChEBI" id="CHEBI:57945"/>
        <dbReference type="ChEBI" id="CHEBI:141212"/>
    </reaction>
    <physiologicalReaction direction="left-to-right" evidence="4">
        <dbReference type="Rhea" id="RHEA:76624"/>
    </physiologicalReaction>
</comment>
<comment type="catalytic activity">
    <reaction evidence="4">
        <text>(S)-2-methyl-3-oxopropanoate + NAD(+) + CoA + H2O = propanoyl-CoA + hydrogencarbonate + NADH + H(+)</text>
        <dbReference type="Rhea" id="RHEA:76627"/>
        <dbReference type="ChEBI" id="CHEBI:15377"/>
        <dbReference type="ChEBI" id="CHEBI:15378"/>
        <dbReference type="ChEBI" id="CHEBI:17544"/>
        <dbReference type="ChEBI" id="CHEBI:57287"/>
        <dbReference type="ChEBI" id="CHEBI:57392"/>
        <dbReference type="ChEBI" id="CHEBI:57540"/>
        <dbReference type="ChEBI" id="CHEBI:57945"/>
        <dbReference type="ChEBI" id="CHEBI:62413"/>
    </reaction>
    <physiologicalReaction direction="left-to-right" evidence="4">
        <dbReference type="Rhea" id="RHEA:76628"/>
    </physiologicalReaction>
</comment>
<comment type="subunit">
    <text evidence="4">Homotetramer.</text>
</comment>
<comment type="subcellular location">
    <subcellularLocation>
        <location evidence="4">Mitochondrion</location>
    </subcellularLocation>
</comment>
<comment type="PTM">
    <text>Acetylation of Lys-55; Lys-117 and Lys-331 is observed in liver mitochondria from fasted mice but not from fed mice.</text>
</comment>
<comment type="similarity">
    <text evidence="7">Belongs to the aldehyde dehydrogenase family.</text>
</comment>
<organism>
    <name type="scientific">Mus musculus</name>
    <name type="common">Mouse</name>
    <dbReference type="NCBI Taxonomy" id="10090"/>
    <lineage>
        <taxon>Eukaryota</taxon>
        <taxon>Metazoa</taxon>
        <taxon>Chordata</taxon>
        <taxon>Craniata</taxon>
        <taxon>Vertebrata</taxon>
        <taxon>Euteleostomi</taxon>
        <taxon>Mammalia</taxon>
        <taxon>Eutheria</taxon>
        <taxon>Euarchontoglires</taxon>
        <taxon>Glires</taxon>
        <taxon>Rodentia</taxon>
        <taxon>Myomorpha</taxon>
        <taxon>Muroidea</taxon>
        <taxon>Muridae</taxon>
        <taxon>Murinae</taxon>
        <taxon>Mus</taxon>
        <taxon>Mus</taxon>
    </lineage>
</organism>
<name>MMSA_MOUSE</name>
<evidence type="ECO:0000250" key="1"/>
<evidence type="ECO:0000250" key="2">
    <source>
        <dbReference type="UniProtKB" id="P42412"/>
    </source>
</evidence>
<evidence type="ECO:0000250" key="3">
    <source>
        <dbReference type="UniProtKB" id="Q02252"/>
    </source>
</evidence>
<evidence type="ECO:0000250" key="4">
    <source>
        <dbReference type="UniProtKB" id="Q02253"/>
    </source>
</evidence>
<evidence type="ECO:0000255" key="5">
    <source>
        <dbReference type="PROSITE-ProRule" id="PRU10008"/>
    </source>
</evidence>
<evidence type="ECO:0000303" key="6">
    <source ref="1"/>
</evidence>
<evidence type="ECO:0000305" key="7"/>
<evidence type="ECO:0000312" key="8">
    <source>
        <dbReference type="MGI" id="MGI:1915077"/>
    </source>
</evidence>
<evidence type="ECO:0007744" key="9">
    <source>
    </source>
</evidence>
<evidence type="ECO:0007744" key="10">
    <source>
    </source>
</evidence>
<proteinExistence type="evidence at protein level"/>
<dbReference type="EC" id="1.2.1.27" evidence="4"/>
<dbReference type="EMBL" id="AF297860">
    <property type="protein sequence ID" value="AAG44988.1"/>
    <property type="molecule type" value="mRNA"/>
</dbReference>
<dbReference type="EMBL" id="AK033587">
    <property type="protein sequence ID" value="BAC28375.1"/>
    <property type="molecule type" value="mRNA"/>
</dbReference>
<dbReference type="EMBL" id="AK147146">
    <property type="protein sequence ID" value="BAE27715.1"/>
    <property type="molecule type" value="mRNA"/>
</dbReference>
<dbReference type="EMBL" id="AK155814">
    <property type="protein sequence ID" value="BAE33445.1"/>
    <property type="molecule type" value="mRNA"/>
</dbReference>
<dbReference type="EMBL" id="AK169915">
    <property type="protein sequence ID" value="BAE41455.1"/>
    <property type="molecule type" value="mRNA"/>
</dbReference>
<dbReference type="EMBL" id="AK170305">
    <property type="protein sequence ID" value="BAE41702.1"/>
    <property type="molecule type" value="mRNA"/>
</dbReference>
<dbReference type="EMBL" id="AK171581">
    <property type="protein sequence ID" value="BAE42539.1"/>
    <property type="molecule type" value="mRNA"/>
</dbReference>
<dbReference type="EMBL" id="AK171896">
    <property type="protein sequence ID" value="BAE42726.1"/>
    <property type="molecule type" value="mRNA"/>
</dbReference>
<dbReference type="EMBL" id="BC033440">
    <property type="protein sequence ID" value="AAH33440.1"/>
    <property type="molecule type" value="mRNA"/>
</dbReference>
<dbReference type="CCDS" id="CCDS26046.1"/>
<dbReference type="RefSeq" id="NP_598803.1">
    <property type="nucleotide sequence ID" value="NM_134042.3"/>
</dbReference>
<dbReference type="SMR" id="Q9EQ20"/>
<dbReference type="BioGRID" id="222701">
    <property type="interactions" value="18"/>
</dbReference>
<dbReference type="FunCoup" id="Q9EQ20">
    <property type="interactions" value="2466"/>
</dbReference>
<dbReference type="IntAct" id="Q9EQ20">
    <property type="interactions" value="2"/>
</dbReference>
<dbReference type="MINT" id="Q9EQ20"/>
<dbReference type="STRING" id="10090.ENSMUSP00000082288"/>
<dbReference type="GlyGen" id="Q9EQ20">
    <property type="glycosylation" value="3 sites, 1 N-linked glycan (1 site), 1 O-linked glycan (1 site)"/>
</dbReference>
<dbReference type="iPTMnet" id="Q9EQ20"/>
<dbReference type="PhosphoSitePlus" id="Q9EQ20"/>
<dbReference type="SwissPalm" id="Q9EQ20"/>
<dbReference type="REPRODUCTION-2DPAGE" id="Q8CIB4"/>
<dbReference type="REPRODUCTION-2DPAGE" id="Q9EQ20"/>
<dbReference type="jPOST" id="Q9EQ20"/>
<dbReference type="PaxDb" id="10090-ENSMUSP00000082288"/>
<dbReference type="PeptideAtlas" id="Q9EQ20"/>
<dbReference type="ProteomicsDB" id="291478"/>
<dbReference type="Pumba" id="Q9EQ20"/>
<dbReference type="Antibodypedia" id="25547">
    <property type="antibodies" value="503 antibodies from 30 providers"/>
</dbReference>
<dbReference type="DNASU" id="104776"/>
<dbReference type="Ensembl" id="ENSMUST00000085192.7">
    <property type="protein sequence ID" value="ENSMUSP00000082288.6"/>
    <property type="gene ID" value="ENSMUSG00000021238.12"/>
</dbReference>
<dbReference type="GeneID" id="104776"/>
<dbReference type="KEGG" id="mmu:104776"/>
<dbReference type="UCSC" id="uc007ofk.2">
    <property type="organism name" value="mouse"/>
</dbReference>
<dbReference type="AGR" id="MGI:1915077"/>
<dbReference type="CTD" id="4329"/>
<dbReference type="MGI" id="MGI:1915077">
    <property type="gene designation" value="Aldh6a1"/>
</dbReference>
<dbReference type="VEuPathDB" id="HostDB:ENSMUSG00000021238"/>
<dbReference type="eggNOG" id="KOG2449">
    <property type="taxonomic scope" value="Eukaryota"/>
</dbReference>
<dbReference type="GeneTree" id="ENSGT00940000156110"/>
<dbReference type="HOGENOM" id="CLU_005391_1_10_1"/>
<dbReference type="InParanoid" id="Q9EQ20"/>
<dbReference type="OMA" id="GGAKNHI"/>
<dbReference type="OrthoDB" id="310895at2759"/>
<dbReference type="PhylomeDB" id="Q9EQ20"/>
<dbReference type="TreeFam" id="TF105651"/>
<dbReference type="BRENDA" id="1.2.1.18">
    <property type="organism ID" value="3474"/>
</dbReference>
<dbReference type="Reactome" id="R-MMU-70895">
    <property type="pathway name" value="Branched-chain amino acid catabolism"/>
</dbReference>
<dbReference type="BioGRID-ORCS" id="104776">
    <property type="hits" value="3 hits in 79 CRISPR screens"/>
</dbReference>
<dbReference type="ChiTaRS" id="Aldh6a1">
    <property type="organism name" value="mouse"/>
</dbReference>
<dbReference type="PRO" id="PR:Q9EQ20"/>
<dbReference type="Proteomes" id="UP000000589">
    <property type="component" value="Chromosome 12"/>
</dbReference>
<dbReference type="RNAct" id="Q9EQ20">
    <property type="molecule type" value="protein"/>
</dbReference>
<dbReference type="Bgee" id="ENSMUSG00000021238">
    <property type="expression patterns" value="Expressed in right kidney and 254 other cell types or tissues"/>
</dbReference>
<dbReference type="ExpressionAtlas" id="Q9EQ20">
    <property type="expression patterns" value="baseline and differential"/>
</dbReference>
<dbReference type="GO" id="GO:0005739">
    <property type="term" value="C:mitochondrion"/>
    <property type="evidence" value="ECO:0007005"/>
    <property type="project" value="MGI"/>
</dbReference>
<dbReference type="GO" id="GO:0005654">
    <property type="term" value="C:nucleoplasm"/>
    <property type="evidence" value="ECO:0007669"/>
    <property type="project" value="Ensembl"/>
</dbReference>
<dbReference type="GO" id="GO:0018478">
    <property type="term" value="F:malonate-semialdehyde dehydrogenase (acetylating) activity"/>
    <property type="evidence" value="ECO:0007669"/>
    <property type="project" value="UniProtKB-EC"/>
</dbReference>
<dbReference type="GO" id="GO:0004491">
    <property type="term" value="F:methylmalonate-semialdehyde dehydrogenase (acylating, NAD) activity"/>
    <property type="evidence" value="ECO:0007669"/>
    <property type="project" value="UniProtKB-EC"/>
</dbReference>
<dbReference type="GO" id="GO:0050873">
    <property type="term" value="P:brown fat cell differentiation"/>
    <property type="evidence" value="ECO:0000314"/>
    <property type="project" value="MGI"/>
</dbReference>
<dbReference type="GO" id="GO:0006210">
    <property type="term" value="P:thymine catabolic process"/>
    <property type="evidence" value="ECO:0007669"/>
    <property type="project" value="Ensembl"/>
</dbReference>
<dbReference type="GO" id="GO:0006574">
    <property type="term" value="P:valine catabolic process"/>
    <property type="evidence" value="ECO:0007669"/>
    <property type="project" value="Ensembl"/>
</dbReference>
<dbReference type="CDD" id="cd07085">
    <property type="entry name" value="ALDH_F6_MMSDH"/>
    <property type="match status" value="1"/>
</dbReference>
<dbReference type="FunFam" id="3.40.309.10:FF:000002">
    <property type="entry name" value="Methylmalonate-semialdehyde dehydrogenase (Acylating)"/>
    <property type="match status" value="1"/>
</dbReference>
<dbReference type="FunFam" id="3.40.605.10:FF:000003">
    <property type="entry name" value="Methylmalonate-semialdehyde dehydrogenase [acylating]"/>
    <property type="match status" value="1"/>
</dbReference>
<dbReference type="Gene3D" id="3.40.605.10">
    <property type="entry name" value="Aldehyde Dehydrogenase, Chain A, domain 1"/>
    <property type="match status" value="1"/>
</dbReference>
<dbReference type="Gene3D" id="3.40.309.10">
    <property type="entry name" value="Aldehyde Dehydrogenase, Chain A, domain 2"/>
    <property type="match status" value="1"/>
</dbReference>
<dbReference type="InterPro" id="IPR016161">
    <property type="entry name" value="Ald_DH/histidinol_DH"/>
</dbReference>
<dbReference type="InterPro" id="IPR016163">
    <property type="entry name" value="Ald_DH_C"/>
</dbReference>
<dbReference type="InterPro" id="IPR016160">
    <property type="entry name" value="Ald_DH_CS_CYS"/>
</dbReference>
<dbReference type="InterPro" id="IPR016162">
    <property type="entry name" value="Ald_DH_N"/>
</dbReference>
<dbReference type="InterPro" id="IPR015590">
    <property type="entry name" value="Aldehyde_DH_dom"/>
</dbReference>
<dbReference type="InterPro" id="IPR010061">
    <property type="entry name" value="MeMal-semiAld_DH"/>
</dbReference>
<dbReference type="NCBIfam" id="TIGR01722">
    <property type="entry name" value="MMSDH"/>
    <property type="match status" value="1"/>
</dbReference>
<dbReference type="PANTHER" id="PTHR43866">
    <property type="entry name" value="MALONATE-SEMIALDEHYDE DEHYDROGENASE"/>
    <property type="match status" value="1"/>
</dbReference>
<dbReference type="PANTHER" id="PTHR43866:SF3">
    <property type="entry name" value="METHYLMALONATE-SEMIALDEHYDE DEHYDROGENASE [ACYLATING], MITOCHONDRIAL"/>
    <property type="match status" value="1"/>
</dbReference>
<dbReference type="Pfam" id="PF00171">
    <property type="entry name" value="Aldedh"/>
    <property type="match status" value="1"/>
</dbReference>
<dbReference type="SUPFAM" id="SSF53720">
    <property type="entry name" value="ALDH-like"/>
    <property type="match status" value="1"/>
</dbReference>
<dbReference type="PROSITE" id="PS00070">
    <property type="entry name" value="ALDEHYDE_DEHYDR_CYS"/>
    <property type="match status" value="1"/>
</dbReference>
<reference key="1">
    <citation type="submission" date="2000-08" db="EMBL/GenBank/DDBJ databases">
        <title>Mouse methylmalonate-semialdehyde dehydrogenase (MMSDH) cDNA and gene map.</title>
        <authorList>
            <person name="Yang B.-Z."/>
            <person name="Zhang L.-F."/>
            <person name="Roe C.R."/>
            <person name="Ding J.-H."/>
        </authorList>
    </citation>
    <scope>NUCLEOTIDE SEQUENCE [MRNA]</scope>
    <source>
        <tissue>Liver</tissue>
    </source>
</reference>
<reference key="2">
    <citation type="journal article" date="2005" name="Science">
        <title>The transcriptional landscape of the mammalian genome.</title>
        <authorList>
            <person name="Carninci P."/>
            <person name="Kasukawa T."/>
            <person name="Katayama S."/>
            <person name="Gough J."/>
            <person name="Frith M.C."/>
            <person name="Maeda N."/>
            <person name="Oyama R."/>
            <person name="Ravasi T."/>
            <person name="Lenhard B."/>
            <person name="Wells C."/>
            <person name="Kodzius R."/>
            <person name="Shimokawa K."/>
            <person name="Bajic V.B."/>
            <person name="Brenner S.E."/>
            <person name="Batalov S."/>
            <person name="Forrest A.R."/>
            <person name="Zavolan M."/>
            <person name="Davis M.J."/>
            <person name="Wilming L.G."/>
            <person name="Aidinis V."/>
            <person name="Allen J.E."/>
            <person name="Ambesi-Impiombato A."/>
            <person name="Apweiler R."/>
            <person name="Aturaliya R.N."/>
            <person name="Bailey T.L."/>
            <person name="Bansal M."/>
            <person name="Baxter L."/>
            <person name="Beisel K.W."/>
            <person name="Bersano T."/>
            <person name="Bono H."/>
            <person name="Chalk A.M."/>
            <person name="Chiu K.P."/>
            <person name="Choudhary V."/>
            <person name="Christoffels A."/>
            <person name="Clutterbuck D.R."/>
            <person name="Crowe M.L."/>
            <person name="Dalla E."/>
            <person name="Dalrymple B.P."/>
            <person name="de Bono B."/>
            <person name="Della Gatta G."/>
            <person name="di Bernardo D."/>
            <person name="Down T."/>
            <person name="Engstrom P."/>
            <person name="Fagiolini M."/>
            <person name="Faulkner G."/>
            <person name="Fletcher C.F."/>
            <person name="Fukushima T."/>
            <person name="Furuno M."/>
            <person name="Futaki S."/>
            <person name="Gariboldi M."/>
            <person name="Georgii-Hemming P."/>
            <person name="Gingeras T.R."/>
            <person name="Gojobori T."/>
            <person name="Green R.E."/>
            <person name="Gustincich S."/>
            <person name="Harbers M."/>
            <person name="Hayashi Y."/>
            <person name="Hensch T.K."/>
            <person name="Hirokawa N."/>
            <person name="Hill D."/>
            <person name="Huminiecki L."/>
            <person name="Iacono M."/>
            <person name="Ikeo K."/>
            <person name="Iwama A."/>
            <person name="Ishikawa T."/>
            <person name="Jakt M."/>
            <person name="Kanapin A."/>
            <person name="Katoh M."/>
            <person name="Kawasawa Y."/>
            <person name="Kelso J."/>
            <person name="Kitamura H."/>
            <person name="Kitano H."/>
            <person name="Kollias G."/>
            <person name="Krishnan S.P."/>
            <person name="Kruger A."/>
            <person name="Kummerfeld S.K."/>
            <person name="Kurochkin I.V."/>
            <person name="Lareau L.F."/>
            <person name="Lazarevic D."/>
            <person name="Lipovich L."/>
            <person name="Liu J."/>
            <person name="Liuni S."/>
            <person name="McWilliam S."/>
            <person name="Madan Babu M."/>
            <person name="Madera M."/>
            <person name="Marchionni L."/>
            <person name="Matsuda H."/>
            <person name="Matsuzawa S."/>
            <person name="Miki H."/>
            <person name="Mignone F."/>
            <person name="Miyake S."/>
            <person name="Morris K."/>
            <person name="Mottagui-Tabar S."/>
            <person name="Mulder N."/>
            <person name="Nakano N."/>
            <person name="Nakauchi H."/>
            <person name="Ng P."/>
            <person name="Nilsson R."/>
            <person name="Nishiguchi S."/>
            <person name="Nishikawa S."/>
            <person name="Nori F."/>
            <person name="Ohara O."/>
            <person name="Okazaki Y."/>
            <person name="Orlando V."/>
            <person name="Pang K.C."/>
            <person name="Pavan W.J."/>
            <person name="Pavesi G."/>
            <person name="Pesole G."/>
            <person name="Petrovsky N."/>
            <person name="Piazza S."/>
            <person name="Reed J."/>
            <person name="Reid J.F."/>
            <person name="Ring B.Z."/>
            <person name="Ringwald M."/>
            <person name="Rost B."/>
            <person name="Ruan Y."/>
            <person name="Salzberg S.L."/>
            <person name="Sandelin A."/>
            <person name="Schneider C."/>
            <person name="Schoenbach C."/>
            <person name="Sekiguchi K."/>
            <person name="Semple C.A."/>
            <person name="Seno S."/>
            <person name="Sessa L."/>
            <person name="Sheng Y."/>
            <person name="Shibata Y."/>
            <person name="Shimada H."/>
            <person name="Shimada K."/>
            <person name="Silva D."/>
            <person name="Sinclair B."/>
            <person name="Sperling S."/>
            <person name="Stupka E."/>
            <person name="Sugiura K."/>
            <person name="Sultana R."/>
            <person name="Takenaka Y."/>
            <person name="Taki K."/>
            <person name="Tammoja K."/>
            <person name="Tan S.L."/>
            <person name="Tang S."/>
            <person name="Taylor M.S."/>
            <person name="Tegner J."/>
            <person name="Teichmann S.A."/>
            <person name="Ueda H.R."/>
            <person name="van Nimwegen E."/>
            <person name="Verardo R."/>
            <person name="Wei C.L."/>
            <person name="Yagi K."/>
            <person name="Yamanishi H."/>
            <person name="Zabarovsky E."/>
            <person name="Zhu S."/>
            <person name="Zimmer A."/>
            <person name="Hide W."/>
            <person name="Bult C."/>
            <person name="Grimmond S.M."/>
            <person name="Teasdale R.D."/>
            <person name="Liu E.T."/>
            <person name="Brusic V."/>
            <person name="Quackenbush J."/>
            <person name="Wahlestedt C."/>
            <person name="Mattick J.S."/>
            <person name="Hume D.A."/>
            <person name="Kai C."/>
            <person name="Sasaki D."/>
            <person name="Tomaru Y."/>
            <person name="Fukuda S."/>
            <person name="Kanamori-Katayama M."/>
            <person name="Suzuki M."/>
            <person name="Aoki J."/>
            <person name="Arakawa T."/>
            <person name="Iida J."/>
            <person name="Imamura K."/>
            <person name="Itoh M."/>
            <person name="Kato T."/>
            <person name="Kawaji H."/>
            <person name="Kawagashira N."/>
            <person name="Kawashima T."/>
            <person name="Kojima M."/>
            <person name="Kondo S."/>
            <person name="Konno H."/>
            <person name="Nakano K."/>
            <person name="Ninomiya N."/>
            <person name="Nishio T."/>
            <person name="Okada M."/>
            <person name="Plessy C."/>
            <person name="Shibata K."/>
            <person name="Shiraki T."/>
            <person name="Suzuki S."/>
            <person name="Tagami M."/>
            <person name="Waki K."/>
            <person name="Watahiki A."/>
            <person name="Okamura-Oho Y."/>
            <person name="Suzuki H."/>
            <person name="Kawai J."/>
            <person name="Hayashizaki Y."/>
        </authorList>
    </citation>
    <scope>NUCLEOTIDE SEQUENCE [LARGE SCALE MRNA]</scope>
    <source>
        <strain>C57BL/6J</strain>
        <strain>NOD</strain>
        <tissue>Cecum</tissue>
        <tissue>Kidney</tissue>
        <tissue>Spleen</tissue>
    </source>
</reference>
<reference key="3">
    <citation type="journal article" date="2004" name="Genome Res.">
        <title>The status, quality, and expansion of the NIH full-length cDNA project: the Mammalian Gene Collection (MGC).</title>
        <authorList>
            <consortium name="The MGC Project Team"/>
        </authorList>
    </citation>
    <scope>NUCLEOTIDE SEQUENCE [LARGE SCALE MRNA]</scope>
    <source>
        <strain>FVB/N</strain>
        <tissue>Liver</tissue>
    </source>
</reference>
<reference key="4">
    <citation type="journal article" date="2010" name="Cell">
        <title>A tissue-specific atlas of mouse protein phosphorylation and expression.</title>
        <authorList>
            <person name="Huttlin E.L."/>
            <person name="Jedrychowski M.P."/>
            <person name="Elias J.E."/>
            <person name="Goswami T."/>
            <person name="Rad R."/>
            <person name="Beausoleil S.A."/>
            <person name="Villen J."/>
            <person name="Haas W."/>
            <person name="Sowa M.E."/>
            <person name="Gygi S.P."/>
        </authorList>
    </citation>
    <scope>IDENTIFICATION BY MASS SPECTROMETRY [LARGE SCALE ANALYSIS]</scope>
    <source>
        <tissue>Brain</tissue>
        <tissue>Brown adipose tissue</tissue>
        <tissue>Heart</tissue>
        <tissue>Kidney</tissue>
        <tissue>Liver</tissue>
        <tissue>Lung</tissue>
        <tissue>Pancreas</tissue>
        <tissue>Spleen</tissue>
        <tissue>Testis</tissue>
    </source>
</reference>
<reference key="5">
    <citation type="journal article" date="2013" name="Mol. Cell">
        <title>SIRT5-mediated lysine desuccinylation impacts diverse metabolic pathways.</title>
        <authorList>
            <person name="Park J."/>
            <person name="Chen Y."/>
            <person name="Tishkoff D.X."/>
            <person name="Peng C."/>
            <person name="Tan M."/>
            <person name="Dai L."/>
            <person name="Xie Z."/>
            <person name="Zhang Y."/>
            <person name="Zwaans B.M."/>
            <person name="Skinner M.E."/>
            <person name="Lombard D.B."/>
            <person name="Zhao Y."/>
        </authorList>
    </citation>
    <scope>SUCCINYLATION [LARGE SCALE ANALYSIS] AT LYS-47; LYS-52; LYS-55; LYS-76; LYS-117; LYS-129; LYS-364; LYS-376; LYS-391 AND LYS-517</scope>
    <scope>IDENTIFICATION BY MASS SPECTROMETRY [LARGE SCALE ANALYSIS]</scope>
    <source>
        <tissue>Liver</tissue>
    </source>
</reference>
<reference key="6">
    <citation type="journal article" date="2013" name="Proc. Natl. Acad. Sci. U.S.A.">
        <title>Label-free quantitative proteomics of the lysine acetylome in mitochondria identifies substrates of SIRT3 in metabolic pathways.</title>
        <authorList>
            <person name="Rardin M.J."/>
            <person name="Newman J.C."/>
            <person name="Held J.M."/>
            <person name="Cusack M.P."/>
            <person name="Sorensen D.J."/>
            <person name="Li B."/>
            <person name="Schilling B."/>
            <person name="Mooney S.D."/>
            <person name="Kahn C.R."/>
            <person name="Verdin E."/>
            <person name="Gibson B.W."/>
        </authorList>
    </citation>
    <scope>ACETYLATION [LARGE SCALE ANALYSIS] AT LYS-47; LYS-52; LYS-55; LYS-76; LYS-87; LYS-117; LYS-129; LYS-298; LYS-330; LYS-331; LYS-364; LYS-376 AND LYS-500</scope>
    <scope>IDENTIFICATION BY MASS SPECTROMETRY [LARGE SCALE ANALYSIS]</scope>
    <source>
        <tissue>Liver</tissue>
    </source>
</reference>
<accession>Q9EQ20</accession>
<accession>Q3TDA2</accession>
<accession>Q8CIB4</accession>
<protein>
    <recommendedName>
        <fullName evidence="4">Methylmalonate-semialdehyde/malonate-semialdehyde dehydrogenase [acylating], mitochondrial</fullName>
        <shortName evidence="6">MMSDH</shortName>
        <ecNumber evidence="4">1.2.1.27</ecNumber>
    </recommendedName>
    <alternativeName>
        <fullName evidence="8">Aldehyde dehydrogenase family 6 member A1</fullName>
    </alternativeName>
    <alternativeName>
        <fullName evidence="4">Malonate-semialdehyde dehydrogenase [acylating]</fullName>
    </alternativeName>
</protein>
<keyword id="KW-0007">Acetylation</keyword>
<keyword id="KW-0496">Mitochondrion</keyword>
<keyword id="KW-0520">NAD</keyword>
<keyword id="KW-0560">Oxidoreductase</keyword>
<keyword id="KW-0597">Phosphoprotein</keyword>
<keyword id="KW-1185">Reference proteome</keyword>
<keyword id="KW-0809">Transit peptide</keyword>
<feature type="transit peptide" description="Mitochondrion" evidence="1">
    <location>
        <begin position="1"/>
        <end position="32"/>
    </location>
</feature>
<feature type="chain" id="PRO_0000320299" description="Methylmalonate-semialdehyde/malonate-semialdehyde dehydrogenase [acylating], mitochondrial">
    <location>
        <begin position="33"/>
        <end position="535"/>
    </location>
</feature>
<feature type="active site" description="Nucleophile" evidence="5">
    <location>
        <position position="317"/>
    </location>
</feature>
<feature type="binding site" evidence="2">
    <location>
        <position position="183"/>
    </location>
    <ligand>
        <name>NAD(+)</name>
        <dbReference type="ChEBI" id="CHEBI:57540"/>
    </ligand>
</feature>
<feature type="binding site" evidence="2">
    <location>
        <position position="185"/>
    </location>
    <ligand>
        <name>NAD(+)</name>
        <dbReference type="ChEBI" id="CHEBI:57540"/>
    </ligand>
</feature>
<feature type="binding site" evidence="2">
    <location>
        <position position="209"/>
    </location>
    <ligand>
        <name>NAD(+)</name>
        <dbReference type="ChEBI" id="CHEBI:57540"/>
    </ligand>
</feature>
<feature type="binding site" evidence="2">
    <location>
        <position position="212"/>
    </location>
    <ligand>
        <name>NAD(+)</name>
        <dbReference type="ChEBI" id="CHEBI:57540"/>
    </ligand>
</feature>
<feature type="binding site" evidence="2">
    <location>
        <position position="213"/>
    </location>
    <ligand>
        <name>NAD(+)</name>
        <dbReference type="ChEBI" id="CHEBI:57540"/>
    </ligand>
</feature>
<feature type="binding site" evidence="2">
    <location>
        <position position="262"/>
    </location>
    <ligand>
        <name>NAD(+)</name>
        <dbReference type="ChEBI" id="CHEBI:57540"/>
    </ligand>
</feature>
<feature type="binding site" evidence="2">
    <location>
        <position position="417"/>
    </location>
    <ligand>
        <name>NAD(+)</name>
        <dbReference type="ChEBI" id="CHEBI:57540"/>
    </ligand>
</feature>
<feature type="modified residue" description="N6-acetyllysine; alternate" evidence="9">
    <location>
        <position position="47"/>
    </location>
</feature>
<feature type="modified residue" description="N6-succinyllysine; alternate" evidence="10">
    <location>
        <position position="47"/>
    </location>
</feature>
<feature type="modified residue" description="N6-acetyllysine; alternate" evidence="9">
    <location>
        <position position="52"/>
    </location>
</feature>
<feature type="modified residue" description="N6-succinyllysine; alternate" evidence="10">
    <location>
        <position position="52"/>
    </location>
</feature>
<feature type="modified residue" description="N6-acetyllysine; alternate" evidence="9">
    <location>
        <position position="55"/>
    </location>
</feature>
<feature type="modified residue" description="N6-succinyllysine; alternate" evidence="10">
    <location>
        <position position="55"/>
    </location>
</feature>
<feature type="modified residue" description="N6-acetyllysine; alternate" evidence="9">
    <location>
        <position position="76"/>
    </location>
</feature>
<feature type="modified residue" description="N6-succinyllysine; alternate" evidence="10">
    <location>
        <position position="76"/>
    </location>
</feature>
<feature type="modified residue" description="N6-acetyllysine" evidence="9">
    <location>
        <position position="87"/>
    </location>
</feature>
<feature type="modified residue" description="N6-acetyllysine; alternate" evidence="9">
    <location>
        <position position="117"/>
    </location>
</feature>
<feature type="modified residue" description="N6-succinyllysine; alternate" evidence="10">
    <location>
        <position position="117"/>
    </location>
</feature>
<feature type="modified residue" description="N6-acetyllysine; alternate" evidence="9">
    <location>
        <position position="129"/>
    </location>
</feature>
<feature type="modified residue" description="N6-succinyllysine; alternate" evidence="10">
    <location>
        <position position="129"/>
    </location>
</feature>
<feature type="modified residue" description="Phosphoserine" evidence="3">
    <location>
        <position position="262"/>
    </location>
</feature>
<feature type="modified residue" description="N6-acetyllysine" evidence="9">
    <location>
        <position position="298"/>
    </location>
</feature>
<feature type="modified residue" description="N6-acetyllysine" evidence="9">
    <location>
        <position position="330"/>
    </location>
</feature>
<feature type="modified residue" description="N6-acetyllysine" evidence="9">
    <location>
        <position position="331"/>
    </location>
</feature>
<feature type="modified residue" description="N6-acetyllysine; alternate" evidence="9">
    <location>
        <position position="364"/>
    </location>
</feature>
<feature type="modified residue" description="N6-succinyllysine; alternate" evidence="10">
    <location>
        <position position="364"/>
    </location>
</feature>
<feature type="modified residue" description="N6-acetyllysine; alternate" evidence="9">
    <location>
        <position position="376"/>
    </location>
</feature>
<feature type="modified residue" description="N6-succinyllysine; alternate" evidence="10">
    <location>
        <position position="376"/>
    </location>
</feature>
<feature type="modified residue" description="Phosphoserine" evidence="3">
    <location>
        <position position="380"/>
    </location>
</feature>
<feature type="modified residue" description="N6-succinyllysine" evidence="10">
    <location>
        <position position="391"/>
    </location>
</feature>
<feature type="modified residue" description="N6-acetyllysine" evidence="9">
    <location>
        <position position="500"/>
    </location>
</feature>
<feature type="modified residue" description="N6-succinyllysine" evidence="10">
    <location>
        <position position="517"/>
    </location>
</feature>
<feature type="sequence conflict" description="In Ref. 2; BAE41702." evidence="7" ref="2">
    <original>K</original>
    <variation>R</variation>
    <location>
        <position position="55"/>
    </location>
</feature>
<feature type="sequence conflict" description="In Ref. 3; AAH33440." evidence="7" ref="3">
    <original>G</original>
    <variation>C</variation>
    <location>
        <position position="141"/>
    </location>
</feature>
<feature type="sequence conflict" description="In Ref. 2; BAE41702." evidence="7" ref="2">
    <original>S</original>
    <variation>P</variation>
    <location>
        <position position="211"/>
    </location>
</feature>
<gene>
    <name evidence="8" type="primary">Aldh6a1</name>
</gene>